<evidence type="ECO:0000250" key="1">
    <source>
        <dbReference type="UniProtKB" id="P52754"/>
    </source>
</evidence>
<evidence type="ECO:0000255" key="2"/>
<evidence type="ECO:0000269" key="3">
    <source>
    </source>
</evidence>
<evidence type="ECO:0000303" key="4">
    <source>
    </source>
</evidence>
<evidence type="ECO:0000305" key="5"/>
<evidence type="ECO:0000305" key="6">
    <source>
    </source>
</evidence>
<protein>
    <recommendedName>
        <fullName evidence="4">Class I hydrophobin G</fullName>
    </recommendedName>
</protein>
<name>HFBG_PENEN</name>
<proteinExistence type="inferred from homology"/>
<sequence>MRLSILSVFSLVGAGMVSALPQESNLSMKRSDTSECVGPLLCCGTLTTPLDPVVDPLLLALGIDAANIVGSIGLLCHGYEESSCPTKPQCCTEANLLGGTLALGCADLK</sequence>
<reference key="1">
    <citation type="journal article" date="2015" name="Mol. Plant Microbe Interact.">
        <title>Genome, transcriptome, and functional analyses of Penicillium expansum provide new insights into secondary metabolism and pathogenicity.</title>
        <authorList>
            <person name="Ballester A.R."/>
            <person name="Marcet-Houben M."/>
            <person name="Levin E."/>
            <person name="Sela N."/>
            <person name="Selma-Lazaro C."/>
            <person name="Carmona L."/>
            <person name="Wisniewski M."/>
            <person name="Droby S."/>
            <person name="Gonzalez-Candelas L."/>
            <person name="Gabaldon T."/>
        </authorList>
    </citation>
    <scope>NUCLEOTIDE SEQUENCE [LARGE SCALE GENOMIC DNA]</scope>
    <source>
        <strain>MD-8</strain>
    </source>
</reference>
<reference key="2">
    <citation type="journal article" date="2022" name="MBio">
        <title>The Hydrophobin Gene Family Confers a Fitness Trade-off between Spore Dispersal and Host Colonization in Penicillium expansum.</title>
        <authorList>
            <person name="Luciano-Rosario D."/>
            <person name="Eagan J.L."/>
            <person name="Aryal N."/>
            <person name="Dominguez E.G."/>
            <person name="Hull C.M."/>
            <person name="Keller N.P."/>
        </authorList>
    </citation>
    <scope>FUNCTION</scope>
    <scope>DISRUPTION PHENOTYPE</scope>
</reference>
<accession>A0A0A2J434</accession>
<gene>
    <name evidence="4" type="primary">HfbG</name>
    <name type="ORF">PEX2_067450</name>
</gene>
<organism>
    <name type="scientific">Penicillium expansum</name>
    <name type="common">Blue mold rot fungus</name>
    <dbReference type="NCBI Taxonomy" id="27334"/>
    <lineage>
        <taxon>Eukaryota</taxon>
        <taxon>Fungi</taxon>
        <taxon>Dikarya</taxon>
        <taxon>Ascomycota</taxon>
        <taxon>Pezizomycotina</taxon>
        <taxon>Eurotiomycetes</taxon>
        <taxon>Eurotiomycetidae</taxon>
        <taxon>Eurotiales</taxon>
        <taxon>Aspergillaceae</taxon>
        <taxon>Penicillium</taxon>
    </lineage>
</organism>
<dbReference type="EMBL" id="JQFZ01000121">
    <property type="protein sequence ID" value="KGO58235.1"/>
    <property type="molecule type" value="Genomic_DNA"/>
</dbReference>
<dbReference type="RefSeq" id="XP_016599729.1">
    <property type="nucleotide sequence ID" value="XM_016744016.1"/>
</dbReference>
<dbReference type="STRING" id="27334.A0A0A2J434"/>
<dbReference type="GeneID" id="27679436"/>
<dbReference type="VEuPathDB" id="FungiDB:PEXP_098360"/>
<dbReference type="HOGENOM" id="CLU_2159235_0_0_1"/>
<dbReference type="OrthoDB" id="4225815at2759"/>
<dbReference type="PhylomeDB" id="A0A0A2J434"/>
<dbReference type="Proteomes" id="UP000030143">
    <property type="component" value="Unassembled WGS sequence"/>
</dbReference>
<dbReference type="GO" id="GO:0005576">
    <property type="term" value="C:extracellular region"/>
    <property type="evidence" value="ECO:0007669"/>
    <property type="project" value="UniProtKB-KW"/>
</dbReference>
<dbReference type="GO" id="GO:0009277">
    <property type="term" value="C:fungal-type cell wall"/>
    <property type="evidence" value="ECO:0007669"/>
    <property type="project" value="InterPro"/>
</dbReference>
<dbReference type="GO" id="GO:0005199">
    <property type="term" value="F:structural constituent of cell wall"/>
    <property type="evidence" value="ECO:0007669"/>
    <property type="project" value="InterPro"/>
</dbReference>
<dbReference type="CDD" id="cd23507">
    <property type="entry name" value="hydrophobin_I"/>
    <property type="match status" value="1"/>
</dbReference>
<dbReference type="InterPro" id="IPR001338">
    <property type="entry name" value="Hydrophobin"/>
</dbReference>
<dbReference type="Pfam" id="PF01185">
    <property type="entry name" value="Hydrophobin"/>
    <property type="match status" value="1"/>
</dbReference>
<keyword id="KW-0134">Cell wall</keyword>
<keyword id="KW-1015">Disulfide bond</keyword>
<keyword id="KW-1185">Reference proteome</keyword>
<keyword id="KW-0964">Secreted</keyword>
<keyword id="KW-0732">Signal</keyword>
<comment type="function">
    <text evidence="3 6">Aerial growth, conidiation, and dispersal of filamentous fungi in the environment rely upon a capability of their secreting small amphipathic proteins called hydrophobins (HPBs) with low sequence identity. Class I can self-assemble into an outermost layer of rodlet bundles on aerial cell surfaces, conferring cellular hydrophobicity that supports fungal growth, development and dispersal; whereas Class II form highly ordered films at water-air interfaces through intermolecular interactions but contribute nothing to the rodlet structure (Probable). In P.expansum, hydrophobins contribute to germination, tolerance to cold stress and mycotoxins patulin and citrinin production (PubMed:36374077).</text>
</comment>
<comment type="subcellular location">
    <subcellularLocation>
        <location evidence="6">Secreted</location>
    </subcellularLocation>
    <subcellularLocation>
        <location evidence="6">Secreted</location>
        <location evidence="6">Cell wall</location>
    </subcellularLocation>
</comment>
<comment type="disruption phenotype">
    <text evidence="3">Disruption of all 7 hydrophobins leads to altered germination kinetics, decreased survival under exposure to extreme cold stress and increased mycotoxins patulin and citrinin production.</text>
</comment>
<comment type="similarity">
    <text evidence="5">Belongs to the fungal hydrophobin family.</text>
</comment>
<feature type="signal peptide" evidence="2">
    <location>
        <begin position="1"/>
        <end position="19"/>
    </location>
</feature>
<feature type="chain" id="PRO_5013986742" description="Class I hydrophobin G">
    <location>
        <begin position="20"/>
        <end position="109"/>
    </location>
</feature>
<feature type="disulfide bond" evidence="1">
    <location>
        <begin position="36"/>
        <end position="90"/>
    </location>
</feature>
<feature type="disulfide bond" evidence="1">
    <location>
        <begin position="42"/>
        <end position="84"/>
    </location>
</feature>
<feature type="disulfide bond" evidence="1">
    <location>
        <begin position="43"/>
        <end position="76"/>
    </location>
</feature>
<feature type="disulfide bond" evidence="1">
    <location>
        <begin position="91"/>
        <end position="105"/>
    </location>
</feature>